<gene>
    <name evidence="1" type="primary">murI</name>
    <name type="ordered locus">PMN2A_0054</name>
</gene>
<feature type="chain" id="PRO_1000059072" description="Glutamate racemase">
    <location>
        <begin position="1"/>
        <end position="265"/>
    </location>
</feature>
<feature type="active site" description="Proton donor/acceptor" evidence="1">
    <location>
        <position position="70"/>
    </location>
</feature>
<feature type="active site" description="Proton donor/acceptor" evidence="1">
    <location>
        <position position="177"/>
    </location>
</feature>
<feature type="binding site" evidence="1">
    <location>
        <begin position="7"/>
        <end position="8"/>
    </location>
    <ligand>
        <name>substrate</name>
    </ligand>
</feature>
<feature type="binding site" evidence="1">
    <location>
        <begin position="39"/>
        <end position="40"/>
    </location>
    <ligand>
        <name>substrate</name>
    </ligand>
</feature>
<feature type="binding site" evidence="1">
    <location>
        <begin position="71"/>
        <end position="72"/>
    </location>
    <ligand>
        <name>substrate</name>
    </ligand>
</feature>
<keyword id="KW-0133">Cell shape</keyword>
<keyword id="KW-0961">Cell wall biogenesis/degradation</keyword>
<keyword id="KW-0413">Isomerase</keyword>
<keyword id="KW-0573">Peptidoglycan synthesis</keyword>
<keyword id="KW-1185">Reference proteome</keyword>
<accession>Q46LT2</accession>
<evidence type="ECO:0000255" key="1">
    <source>
        <dbReference type="HAMAP-Rule" id="MF_00258"/>
    </source>
</evidence>
<dbReference type="EC" id="5.1.1.3" evidence="1"/>
<dbReference type="EMBL" id="CP000095">
    <property type="protein sequence ID" value="AAZ57546.1"/>
    <property type="molecule type" value="Genomic_DNA"/>
</dbReference>
<dbReference type="RefSeq" id="WP_011293588.1">
    <property type="nucleotide sequence ID" value="NC_007335.2"/>
</dbReference>
<dbReference type="SMR" id="Q46LT2"/>
<dbReference type="STRING" id="59920.PMN2A_0054"/>
<dbReference type="KEGG" id="pmn:PMN2A_0054"/>
<dbReference type="HOGENOM" id="CLU_052344_0_2_3"/>
<dbReference type="OrthoDB" id="9801055at2"/>
<dbReference type="PhylomeDB" id="Q46LT2"/>
<dbReference type="UniPathway" id="UPA00219"/>
<dbReference type="Proteomes" id="UP000002535">
    <property type="component" value="Chromosome"/>
</dbReference>
<dbReference type="GO" id="GO:0008881">
    <property type="term" value="F:glutamate racemase activity"/>
    <property type="evidence" value="ECO:0007669"/>
    <property type="project" value="UniProtKB-UniRule"/>
</dbReference>
<dbReference type="GO" id="GO:0071555">
    <property type="term" value="P:cell wall organization"/>
    <property type="evidence" value="ECO:0007669"/>
    <property type="project" value="UniProtKB-KW"/>
</dbReference>
<dbReference type="GO" id="GO:0009252">
    <property type="term" value="P:peptidoglycan biosynthetic process"/>
    <property type="evidence" value="ECO:0007669"/>
    <property type="project" value="UniProtKB-UniRule"/>
</dbReference>
<dbReference type="GO" id="GO:0008360">
    <property type="term" value="P:regulation of cell shape"/>
    <property type="evidence" value="ECO:0007669"/>
    <property type="project" value="UniProtKB-KW"/>
</dbReference>
<dbReference type="FunFam" id="3.40.50.1860:FF:000001">
    <property type="entry name" value="Glutamate racemase"/>
    <property type="match status" value="1"/>
</dbReference>
<dbReference type="Gene3D" id="3.40.50.1860">
    <property type="match status" value="2"/>
</dbReference>
<dbReference type="HAMAP" id="MF_00258">
    <property type="entry name" value="Glu_racemase"/>
    <property type="match status" value="1"/>
</dbReference>
<dbReference type="InterPro" id="IPR015942">
    <property type="entry name" value="Asp/Glu/hydantoin_racemase"/>
</dbReference>
<dbReference type="InterPro" id="IPR001920">
    <property type="entry name" value="Asp/Glu_race"/>
</dbReference>
<dbReference type="InterPro" id="IPR004391">
    <property type="entry name" value="Glu_race"/>
</dbReference>
<dbReference type="NCBIfam" id="TIGR00067">
    <property type="entry name" value="glut_race"/>
    <property type="match status" value="1"/>
</dbReference>
<dbReference type="PANTHER" id="PTHR21198">
    <property type="entry name" value="GLUTAMATE RACEMASE"/>
    <property type="match status" value="1"/>
</dbReference>
<dbReference type="PANTHER" id="PTHR21198:SF2">
    <property type="entry name" value="GLUTAMATE RACEMASE"/>
    <property type="match status" value="1"/>
</dbReference>
<dbReference type="Pfam" id="PF01177">
    <property type="entry name" value="Asp_Glu_race"/>
    <property type="match status" value="1"/>
</dbReference>
<dbReference type="SUPFAM" id="SSF53681">
    <property type="entry name" value="Aspartate/glutamate racemase"/>
    <property type="match status" value="2"/>
</dbReference>
<comment type="function">
    <text evidence="1">Provides the (R)-glutamate required for cell wall biosynthesis.</text>
</comment>
<comment type="catalytic activity">
    <reaction evidence="1">
        <text>L-glutamate = D-glutamate</text>
        <dbReference type="Rhea" id="RHEA:12813"/>
        <dbReference type="ChEBI" id="CHEBI:29985"/>
        <dbReference type="ChEBI" id="CHEBI:29986"/>
        <dbReference type="EC" id="5.1.1.3"/>
    </reaction>
</comment>
<comment type="pathway">
    <text evidence="1">Cell wall biogenesis; peptidoglycan biosynthesis.</text>
</comment>
<comment type="similarity">
    <text evidence="1">Belongs to the aspartate/glutamate racemases family.</text>
</comment>
<protein>
    <recommendedName>
        <fullName evidence="1">Glutamate racemase</fullName>
        <ecNumber evidence="1">5.1.1.3</ecNumber>
    </recommendedName>
</protein>
<reference key="1">
    <citation type="journal article" date="2007" name="PLoS Genet.">
        <title>Patterns and implications of gene gain and loss in the evolution of Prochlorococcus.</title>
        <authorList>
            <person name="Kettler G.C."/>
            <person name="Martiny A.C."/>
            <person name="Huang K."/>
            <person name="Zucker J."/>
            <person name="Coleman M.L."/>
            <person name="Rodrigue S."/>
            <person name="Chen F."/>
            <person name="Lapidus A."/>
            <person name="Ferriera S."/>
            <person name="Johnson J."/>
            <person name="Steglich C."/>
            <person name="Church G.M."/>
            <person name="Richardson P."/>
            <person name="Chisholm S.W."/>
        </authorList>
    </citation>
    <scope>NUCLEOTIDE SEQUENCE [LARGE SCALE GENOMIC DNA]</scope>
    <source>
        <strain>NATL2A</strain>
    </source>
</reference>
<name>MURI_PROMT</name>
<sequence>MRIGLFDSGIGGFTVLKKVIKLCPNNSFIYLADTARLPYGIKTTNEIKKIAEEISSWFRYQKIDAFLVACNTTNAIALDILKKNLDIPVFDLIGSAASTIQESRVGVLATPSTVKTKAYTNAILEFKPKTFVIEQPCPAFVPMIEMDNINSDDITDVATGYLQPLLKQKIHSLILGCSHYPLIAPSLRKVLPSSVKLIDPAEALSFKLKLFIDSKTSNYSKNKNFVDLKFYVTSNLKHFPNKAKHWLNVFPEVNLVSLQKKGWVS</sequence>
<proteinExistence type="inferred from homology"/>
<organism>
    <name type="scientific">Prochlorococcus marinus (strain NATL2A)</name>
    <dbReference type="NCBI Taxonomy" id="59920"/>
    <lineage>
        <taxon>Bacteria</taxon>
        <taxon>Bacillati</taxon>
        <taxon>Cyanobacteriota</taxon>
        <taxon>Cyanophyceae</taxon>
        <taxon>Synechococcales</taxon>
        <taxon>Prochlorococcaceae</taxon>
        <taxon>Prochlorococcus</taxon>
    </lineage>
</organism>